<proteinExistence type="inferred from homology"/>
<accession>Q9CHW5</accession>
<organism>
    <name type="scientific">Lactococcus lactis subsp. lactis (strain IL1403)</name>
    <name type="common">Streptococcus lactis</name>
    <dbReference type="NCBI Taxonomy" id="272623"/>
    <lineage>
        <taxon>Bacteria</taxon>
        <taxon>Bacillati</taxon>
        <taxon>Bacillota</taxon>
        <taxon>Bacilli</taxon>
        <taxon>Lactobacillales</taxon>
        <taxon>Streptococcaceae</taxon>
        <taxon>Lactococcus</taxon>
    </lineage>
</organism>
<dbReference type="EC" id="2.6.1.52" evidence="1"/>
<dbReference type="EMBL" id="AE005176">
    <property type="protein sequence ID" value="AAK04701.1"/>
    <property type="molecule type" value="Genomic_DNA"/>
</dbReference>
<dbReference type="PIR" id="C86700">
    <property type="entry name" value="C86700"/>
</dbReference>
<dbReference type="RefSeq" id="NP_266759.1">
    <property type="nucleotide sequence ID" value="NC_002662.1"/>
</dbReference>
<dbReference type="RefSeq" id="WP_003129506.1">
    <property type="nucleotide sequence ID" value="NC_002662.1"/>
</dbReference>
<dbReference type="SMR" id="Q9CHW5"/>
<dbReference type="PaxDb" id="272623-L0083"/>
<dbReference type="EnsemblBacteria" id="AAK04701">
    <property type="protein sequence ID" value="AAK04701"/>
    <property type="gene ID" value="L0083"/>
</dbReference>
<dbReference type="KEGG" id="lla:L0083"/>
<dbReference type="PATRIC" id="fig|272623.7.peg.643"/>
<dbReference type="eggNOG" id="COG1932">
    <property type="taxonomic scope" value="Bacteria"/>
</dbReference>
<dbReference type="HOGENOM" id="CLU_034866_0_2_9"/>
<dbReference type="OrthoDB" id="9809412at2"/>
<dbReference type="UniPathway" id="UPA00135">
    <property type="reaction ID" value="UER00197"/>
</dbReference>
<dbReference type="Proteomes" id="UP000002196">
    <property type="component" value="Chromosome"/>
</dbReference>
<dbReference type="GO" id="GO:0005737">
    <property type="term" value="C:cytoplasm"/>
    <property type="evidence" value="ECO:0007669"/>
    <property type="project" value="UniProtKB-SubCell"/>
</dbReference>
<dbReference type="GO" id="GO:0004648">
    <property type="term" value="F:O-phospho-L-serine:2-oxoglutarate aminotransferase activity"/>
    <property type="evidence" value="ECO:0007669"/>
    <property type="project" value="UniProtKB-UniRule"/>
</dbReference>
<dbReference type="GO" id="GO:0030170">
    <property type="term" value="F:pyridoxal phosphate binding"/>
    <property type="evidence" value="ECO:0007669"/>
    <property type="project" value="UniProtKB-UniRule"/>
</dbReference>
<dbReference type="GO" id="GO:0006564">
    <property type="term" value="P:L-serine biosynthetic process"/>
    <property type="evidence" value="ECO:0007669"/>
    <property type="project" value="UniProtKB-UniRule"/>
</dbReference>
<dbReference type="GO" id="GO:0008615">
    <property type="term" value="P:pyridoxine biosynthetic process"/>
    <property type="evidence" value="ECO:0007669"/>
    <property type="project" value="UniProtKB-KW"/>
</dbReference>
<dbReference type="FunFam" id="3.40.640.10:FF:000010">
    <property type="entry name" value="Phosphoserine aminotransferase"/>
    <property type="match status" value="1"/>
</dbReference>
<dbReference type="FunFam" id="3.90.1150.10:FF:000006">
    <property type="entry name" value="Phosphoserine aminotransferase"/>
    <property type="match status" value="1"/>
</dbReference>
<dbReference type="Gene3D" id="3.90.1150.10">
    <property type="entry name" value="Aspartate Aminotransferase, domain 1"/>
    <property type="match status" value="1"/>
</dbReference>
<dbReference type="Gene3D" id="3.40.640.10">
    <property type="entry name" value="Type I PLP-dependent aspartate aminotransferase-like (Major domain)"/>
    <property type="match status" value="1"/>
</dbReference>
<dbReference type="HAMAP" id="MF_00160">
    <property type="entry name" value="SerC_aminotrans_5"/>
    <property type="match status" value="1"/>
</dbReference>
<dbReference type="InterPro" id="IPR000192">
    <property type="entry name" value="Aminotrans_V_dom"/>
</dbReference>
<dbReference type="InterPro" id="IPR020578">
    <property type="entry name" value="Aminotrans_V_PyrdxlP_BS"/>
</dbReference>
<dbReference type="InterPro" id="IPR022278">
    <property type="entry name" value="Pser_aminoTfrase"/>
</dbReference>
<dbReference type="InterPro" id="IPR015424">
    <property type="entry name" value="PyrdxlP-dep_Trfase"/>
</dbReference>
<dbReference type="InterPro" id="IPR015421">
    <property type="entry name" value="PyrdxlP-dep_Trfase_major"/>
</dbReference>
<dbReference type="InterPro" id="IPR015422">
    <property type="entry name" value="PyrdxlP-dep_Trfase_small"/>
</dbReference>
<dbReference type="NCBIfam" id="NF003764">
    <property type="entry name" value="PRK05355.1"/>
    <property type="match status" value="1"/>
</dbReference>
<dbReference type="NCBIfam" id="TIGR01364">
    <property type="entry name" value="serC_1"/>
    <property type="match status" value="1"/>
</dbReference>
<dbReference type="PANTHER" id="PTHR43247">
    <property type="entry name" value="PHOSPHOSERINE AMINOTRANSFERASE"/>
    <property type="match status" value="1"/>
</dbReference>
<dbReference type="PANTHER" id="PTHR43247:SF1">
    <property type="entry name" value="PHOSPHOSERINE AMINOTRANSFERASE"/>
    <property type="match status" value="1"/>
</dbReference>
<dbReference type="Pfam" id="PF00266">
    <property type="entry name" value="Aminotran_5"/>
    <property type="match status" value="1"/>
</dbReference>
<dbReference type="PIRSF" id="PIRSF000525">
    <property type="entry name" value="SerC"/>
    <property type="match status" value="1"/>
</dbReference>
<dbReference type="SUPFAM" id="SSF53383">
    <property type="entry name" value="PLP-dependent transferases"/>
    <property type="match status" value="1"/>
</dbReference>
<dbReference type="PROSITE" id="PS00595">
    <property type="entry name" value="AA_TRANSFER_CLASS_5"/>
    <property type="match status" value="1"/>
</dbReference>
<reference key="1">
    <citation type="journal article" date="2001" name="Genome Res.">
        <title>The complete genome sequence of the lactic acid bacterium Lactococcus lactis ssp. lactis IL1403.</title>
        <authorList>
            <person name="Bolotin A."/>
            <person name="Wincker P."/>
            <person name="Mauger S."/>
            <person name="Jaillon O."/>
            <person name="Malarme K."/>
            <person name="Weissenbach J."/>
            <person name="Ehrlich S.D."/>
            <person name="Sorokin A."/>
        </authorList>
    </citation>
    <scope>NUCLEOTIDE SEQUENCE [LARGE SCALE GENOMIC DNA]</scope>
    <source>
        <strain>IL1403</strain>
    </source>
</reference>
<gene>
    <name evidence="1" type="primary">serC</name>
    <name type="ordered locus">LL0603</name>
    <name type="ORF">L0083</name>
</gene>
<protein>
    <recommendedName>
        <fullName evidence="1">Phosphoserine aminotransferase</fullName>
        <ecNumber evidence="1">2.6.1.52</ecNumber>
    </recommendedName>
    <alternativeName>
        <fullName evidence="1">Phosphohydroxythreonine aminotransferase</fullName>
        <shortName evidence="1">PSAT</shortName>
    </alternativeName>
</protein>
<sequence>MIYNFGAGPSVLPKEVLKKVQEELLDFEKSGMSVMEISHRSKAFQKVIDEAENDLRDLMSIPQNYKILFLQGGASSQFSMVPMNLAIGKKAYYNISGAFGEKAYDEAVKLSHFLDLMAISLGSTKKDNYNHLLKIDKSKIDEKNGAYLHLTTNNTIEGTSIFPENLPEFASLPLVADMSSNILAVDYDVSKFGLIYAGAQKNLGIAGLTIVIIREDLLNEAESLSSMMDYQILVENGSMYNTPPTFAIYVAGLVFKWVKAQGGVKKLEEMNQRKAQLLYDLIDQSDFYQNPIKNKDERSICNVVFTSPSQELDELFTQKAEEKGFKSLKGHRSVGGMRASIYNAFPLEGVVELVKFMKEFEEGYK</sequence>
<name>SERC_LACLA</name>
<keyword id="KW-0028">Amino-acid biosynthesis</keyword>
<keyword id="KW-0032">Aminotransferase</keyword>
<keyword id="KW-0963">Cytoplasm</keyword>
<keyword id="KW-0663">Pyridoxal phosphate</keyword>
<keyword id="KW-0664">Pyridoxine biosynthesis</keyword>
<keyword id="KW-1185">Reference proteome</keyword>
<keyword id="KW-0718">Serine biosynthesis</keyword>
<keyword id="KW-0808">Transferase</keyword>
<feature type="chain" id="PRO_0000150176" description="Phosphoserine aminotransferase">
    <location>
        <begin position="1"/>
        <end position="365"/>
    </location>
</feature>
<feature type="binding site" evidence="1">
    <location>
        <position position="40"/>
    </location>
    <ligand>
        <name>L-glutamate</name>
        <dbReference type="ChEBI" id="CHEBI:29985"/>
    </ligand>
</feature>
<feature type="binding site" evidence="1">
    <location>
        <begin position="74"/>
        <end position="75"/>
    </location>
    <ligand>
        <name>pyridoxal 5'-phosphate</name>
        <dbReference type="ChEBI" id="CHEBI:597326"/>
    </ligand>
</feature>
<feature type="binding site" evidence="1">
    <location>
        <position position="99"/>
    </location>
    <ligand>
        <name>pyridoxal 5'-phosphate</name>
        <dbReference type="ChEBI" id="CHEBI:597326"/>
    </ligand>
</feature>
<feature type="binding site" evidence="1">
    <location>
        <position position="155"/>
    </location>
    <ligand>
        <name>pyridoxal 5'-phosphate</name>
        <dbReference type="ChEBI" id="CHEBI:597326"/>
    </ligand>
</feature>
<feature type="binding site" evidence="1">
    <location>
        <position position="177"/>
    </location>
    <ligand>
        <name>pyridoxal 5'-phosphate</name>
        <dbReference type="ChEBI" id="CHEBI:597326"/>
    </ligand>
</feature>
<feature type="binding site" evidence="1">
    <location>
        <position position="200"/>
    </location>
    <ligand>
        <name>pyridoxal 5'-phosphate</name>
        <dbReference type="ChEBI" id="CHEBI:597326"/>
    </ligand>
</feature>
<feature type="binding site" evidence="1">
    <location>
        <begin position="241"/>
        <end position="242"/>
    </location>
    <ligand>
        <name>pyridoxal 5'-phosphate</name>
        <dbReference type="ChEBI" id="CHEBI:597326"/>
    </ligand>
</feature>
<feature type="modified residue" description="N6-(pyridoxal phosphate)lysine" evidence="1">
    <location>
        <position position="201"/>
    </location>
</feature>
<comment type="function">
    <text evidence="1">Catalyzes the reversible conversion of 3-phosphohydroxypyruvate to phosphoserine and of 3-hydroxy-2-oxo-4-phosphonooxybutanoate to phosphohydroxythreonine.</text>
</comment>
<comment type="catalytic activity">
    <reaction evidence="1">
        <text>O-phospho-L-serine + 2-oxoglutarate = 3-phosphooxypyruvate + L-glutamate</text>
        <dbReference type="Rhea" id="RHEA:14329"/>
        <dbReference type="ChEBI" id="CHEBI:16810"/>
        <dbReference type="ChEBI" id="CHEBI:18110"/>
        <dbReference type="ChEBI" id="CHEBI:29985"/>
        <dbReference type="ChEBI" id="CHEBI:57524"/>
        <dbReference type="EC" id="2.6.1.52"/>
    </reaction>
</comment>
<comment type="catalytic activity">
    <reaction evidence="1">
        <text>4-(phosphooxy)-L-threonine + 2-oxoglutarate = (R)-3-hydroxy-2-oxo-4-phosphooxybutanoate + L-glutamate</text>
        <dbReference type="Rhea" id="RHEA:16573"/>
        <dbReference type="ChEBI" id="CHEBI:16810"/>
        <dbReference type="ChEBI" id="CHEBI:29985"/>
        <dbReference type="ChEBI" id="CHEBI:58452"/>
        <dbReference type="ChEBI" id="CHEBI:58538"/>
        <dbReference type="EC" id="2.6.1.52"/>
    </reaction>
</comment>
<comment type="cofactor">
    <cofactor evidence="1">
        <name>pyridoxal 5'-phosphate</name>
        <dbReference type="ChEBI" id="CHEBI:597326"/>
    </cofactor>
    <text evidence="1">Binds 1 pyridoxal phosphate per subunit.</text>
</comment>
<comment type="pathway">
    <text evidence="1">Amino-acid biosynthesis; L-serine biosynthesis; L-serine from 3-phospho-D-glycerate: step 2/3.</text>
</comment>
<comment type="subunit">
    <text evidence="1">Homodimer.</text>
</comment>
<comment type="subcellular location">
    <subcellularLocation>
        <location evidence="1">Cytoplasm</location>
    </subcellularLocation>
</comment>
<comment type="similarity">
    <text evidence="1">Belongs to the class-V pyridoxal-phosphate-dependent aminotransferase family. SerC subfamily.</text>
</comment>
<evidence type="ECO:0000255" key="1">
    <source>
        <dbReference type="HAMAP-Rule" id="MF_00160"/>
    </source>
</evidence>